<evidence type="ECO:0000255" key="1">
    <source>
        <dbReference type="HAMAP-Rule" id="MF_01576"/>
    </source>
</evidence>
<protein>
    <recommendedName>
        <fullName evidence="1">Bifunctional protein FolD</fullName>
    </recommendedName>
    <domain>
        <recommendedName>
            <fullName evidence="1">Methylenetetrahydrofolate dehydrogenase</fullName>
            <ecNumber evidence="1">1.5.1.5</ecNumber>
        </recommendedName>
    </domain>
    <domain>
        <recommendedName>
            <fullName evidence="1">Methenyltetrahydrofolate cyclohydrolase</fullName>
            <ecNumber evidence="1">3.5.4.9</ecNumber>
        </recommendedName>
    </domain>
</protein>
<accession>Q5FJG5</accession>
<gene>
    <name evidence="1" type="primary">folD</name>
    <name type="ordered locus">LBA1332</name>
</gene>
<keyword id="KW-0028">Amino-acid biosynthesis</keyword>
<keyword id="KW-0368">Histidine biosynthesis</keyword>
<keyword id="KW-0378">Hydrolase</keyword>
<keyword id="KW-0486">Methionine biosynthesis</keyword>
<keyword id="KW-0511">Multifunctional enzyme</keyword>
<keyword id="KW-0521">NADP</keyword>
<keyword id="KW-0554">One-carbon metabolism</keyword>
<keyword id="KW-0560">Oxidoreductase</keyword>
<keyword id="KW-0658">Purine biosynthesis</keyword>
<keyword id="KW-1185">Reference proteome</keyword>
<sequence>MGKILDGKFVANLLGEKLKEKVKDLKEEGITPHFCVINIGDDPASKIYVRTKKRRAEKMGIIQDIYQLPADTKQEVALNLIDKLNEDPDINGVMVQLPAPEQIDADELLERIDPNKDVDGLTPSNIGRIWMENHFIEPATAEGIIALLKYYKILLKGKNVVVIGRSNIVGKPVAALMLEQNATVTIAHSETENLAELTRNADIIVSATGQAFLVTEDMVKDGVVVVDVGMNHVNGKLVGDVDFENVKKKASYITPVPGGVGPLTVQFLMEAVVKLTRRQNGRE</sequence>
<name>FOLD_LACAC</name>
<comment type="function">
    <text evidence="1">Catalyzes the oxidation of 5,10-methylenetetrahydrofolate to 5,10-methenyltetrahydrofolate and then the hydrolysis of 5,10-methenyltetrahydrofolate to 10-formyltetrahydrofolate.</text>
</comment>
<comment type="catalytic activity">
    <reaction evidence="1">
        <text>(6R)-5,10-methylene-5,6,7,8-tetrahydrofolate + NADP(+) = (6R)-5,10-methenyltetrahydrofolate + NADPH</text>
        <dbReference type="Rhea" id="RHEA:22812"/>
        <dbReference type="ChEBI" id="CHEBI:15636"/>
        <dbReference type="ChEBI" id="CHEBI:57455"/>
        <dbReference type="ChEBI" id="CHEBI:57783"/>
        <dbReference type="ChEBI" id="CHEBI:58349"/>
        <dbReference type="EC" id="1.5.1.5"/>
    </reaction>
</comment>
<comment type="catalytic activity">
    <reaction evidence="1">
        <text>(6R)-5,10-methenyltetrahydrofolate + H2O = (6R)-10-formyltetrahydrofolate + H(+)</text>
        <dbReference type="Rhea" id="RHEA:23700"/>
        <dbReference type="ChEBI" id="CHEBI:15377"/>
        <dbReference type="ChEBI" id="CHEBI:15378"/>
        <dbReference type="ChEBI" id="CHEBI:57455"/>
        <dbReference type="ChEBI" id="CHEBI:195366"/>
        <dbReference type="EC" id="3.5.4.9"/>
    </reaction>
</comment>
<comment type="pathway">
    <text evidence="1">One-carbon metabolism; tetrahydrofolate interconversion.</text>
</comment>
<comment type="subunit">
    <text evidence="1">Homodimer.</text>
</comment>
<comment type="similarity">
    <text evidence="1">Belongs to the tetrahydrofolate dehydrogenase/cyclohydrolase family.</text>
</comment>
<dbReference type="EC" id="1.5.1.5" evidence="1"/>
<dbReference type="EC" id="3.5.4.9" evidence="1"/>
<dbReference type="EMBL" id="CP000033">
    <property type="protein sequence ID" value="AAV43159.1"/>
    <property type="molecule type" value="Genomic_DNA"/>
</dbReference>
<dbReference type="RefSeq" id="WP_003547942.1">
    <property type="nucleotide sequence ID" value="NC_006814.3"/>
</dbReference>
<dbReference type="RefSeq" id="YP_194190.1">
    <property type="nucleotide sequence ID" value="NC_006814.3"/>
</dbReference>
<dbReference type="SMR" id="Q5FJG5"/>
<dbReference type="STRING" id="272621.LBA1332"/>
<dbReference type="KEGG" id="lac:LBA1332"/>
<dbReference type="PATRIC" id="fig|272621.13.peg.1260"/>
<dbReference type="eggNOG" id="COG0190">
    <property type="taxonomic scope" value="Bacteria"/>
</dbReference>
<dbReference type="HOGENOM" id="CLU_034045_2_1_9"/>
<dbReference type="OrthoDB" id="9803580at2"/>
<dbReference type="BioCyc" id="LACI272621:G1G49-1309-MONOMER"/>
<dbReference type="UniPathway" id="UPA00193"/>
<dbReference type="Proteomes" id="UP000006381">
    <property type="component" value="Chromosome"/>
</dbReference>
<dbReference type="GO" id="GO:0005829">
    <property type="term" value="C:cytosol"/>
    <property type="evidence" value="ECO:0007669"/>
    <property type="project" value="TreeGrafter"/>
</dbReference>
<dbReference type="GO" id="GO:0004477">
    <property type="term" value="F:methenyltetrahydrofolate cyclohydrolase activity"/>
    <property type="evidence" value="ECO:0007669"/>
    <property type="project" value="UniProtKB-UniRule"/>
</dbReference>
<dbReference type="GO" id="GO:0004488">
    <property type="term" value="F:methylenetetrahydrofolate dehydrogenase (NADP+) activity"/>
    <property type="evidence" value="ECO:0007669"/>
    <property type="project" value="UniProtKB-UniRule"/>
</dbReference>
<dbReference type="GO" id="GO:0000105">
    <property type="term" value="P:L-histidine biosynthetic process"/>
    <property type="evidence" value="ECO:0007669"/>
    <property type="project" value="UniProtKB-KW"/>
</dbReference>
<dbReference type="GO" id="GO:0009086">
    <property type="term" value="P:methionine biosynthetic process"/>
    <property type="evidence" value="ECO:0007669"/>
    <property type="project" value="UniProtKB-KW"/>
</dbReference>
<dbReference type="GO" id="GO:0006164">
    <property type="term" value="P:purine nucleotide biosynthetic process"/>
    <property type="evidence" value="ECO:0007669"/>
    <property type="project" value="UniProtKB-KW"/>
</dbReference>
<dbReference type="GO" id="GO:0035999">
    <property type="term" value="P:tetrahydrofolate interconversion"/>
    <property type="evidence" value="ECO:0007669"/>
    <property type="project" value="UniProtKB-UniRule"/>
</dbReference>
<dbReference type="CDD" id="cd01080">
    <property type="entry name" value="NAD_bind_m-THF_DH_Cyclohyd"/>
    <property type="match status" value="1"/>
</dbReference>
<dbReference type="FunFam" id="3.40.50.720:FF:000094">
    <property type="entry name" value="Bifunctional protein FolD"/>
    <property type="match status" value="1"/>
</dbReference>
<dbReference type="FunFam" id="3.40.50.10860:FF:000005">
    <property type="entry name" value="C-1-tetrahydrofolate synthase, cytoplasmic, putative"/>
    <property type="match status" value="1"/>
</dbReference>
<dbReference type="Gene3D" id="3.40.50.10860">
    <property type="entry name" value="Leucine Dehydrogenase, chain A, domain 1"/>
    <property type="match status" value="1"/>
</dbReference>
<dbReference type="Gene3D" id="3.40.50.720">
    <property type="entry name" value="NAD(P)-binding Rossmann-like Domain"/>
    <property type="match status" value="1"/>
</dbReference>
<dbReference type="HAMAP" id="MF_01576">
    <property type="entry name" value="THF_DHG_CYH"/>
    <property type="match status" value="1"/>
</dbReference>
<dbReference type="InterPro" id="IPR046346">
    <property type="entry name" value="Aminoacid_DH-like_N_sf"/>
</dbReference>
<dbReference type="InterPro" id="IPR036291">
    <property type="entry name" value="NAD(P)-bd_dom_sf"/>
</dbReference>
<dbReference type="InterPro" id="IPR000672">
    <property type="entry name" value="THF_DH/CycHdrlase"/>
</dbReference>
<dbReference type="InterPro" id="IPR020630">
    <property type="entry name" value="THF_DH/CycHdrlase_cat_dom"/>
</dbReference>
<dbReference type="InterPro" id="IPR020631">
    <property type="entry name" value="THF_DH/CycHdrlase_NAD-bd_dom"/>
</dbReference>
<dbReference type="PANTHER" id="PTHR48099:SF5">
    <property type="entry name" value="C-1-TETRAHYDROFOLATE SYNTHASE, CYTOPLASMIC"/>
    <property type="match status" value="1"/>
</dbReference>
<dbReference type="PANTHER" id="PTHR48099">
    <property type="entry name" value="C-1-TETRAHYDROFOLATE SYNTHASE, CYTOPLASMIC-RELATED"/>
    <property type="match status" value="1"/>
</dbReference>
<dbReference type="Pfam" id="PF00763">
    <property type="entry name" value="THF_DHG_CYH"/>
    <property type="match status" value="1"/>
</dbReference>
<dbReference type="Pfam" id="PF02882">
    <property type="entry name" value="THF_DHG_CYH_C"/>
    <property type="match status" value="1"/>
</dbReference>
<dbReference type="PRINTS" id="PR00085">
    <property type="entry name" value="THFDHDRGNASE"/>
</dbReference>
<dbReference type="SUPFAM" id="SSF53223">
    <property type="entry name" value="Aminoacid dehydrogenase-like, N-terminal domain"/>
    <property type="match status" value="1"/>
</dbReference>
<dbReference type="SUPFAM" id="SSF51735">
    <property type="entry name" value="NAD(P)-binding Rossmann-fold domains"/>
    <property type="match status" value="1"/>
</dbReference>
<feature type="chain" id="PRO_0000268373" description="Bifunctional protein FolD">
    <location>
        <begin position="1"/>
        <end position="283"/>
    </location>
</feature>
<feature type="binding site" evidence="1">
    <location>
        <begin position="164"/>
        <end position="166"/>
    </location>
    <ligand>
        <name>NADP(+)</name>
        <dbReference type="ChEBI" id="CHEBI:58349"/>
    </ligand>
</feature>
<feature type="binding site" evidence="1">
    <location>
        <position position="189"/>
    </location>
    <ligand>
        <name>NADP(+)</name>
        <dbReference type="ChEBI" id="CHEBI:58349"/>
    </ligand>
</feature>
<organism>
    <name type="scientific">Lactobacillus acidophilus (strain ATCC 700396 / NCK56 / N2 / NCFM)</name>
    <dbReference type="NCBI Taxonomy" id="272621"/>
    <lineage>
        <taxon>Bacteria</taxon>
        <taxon>Bacillati</taxon>
        <taxon>Bacillota</taxon>
        <taxon>Bacilli</taxon>
        <taxon>Lactobacillales</taxon>
        <taxon>Lactobacillaceae</taxon>
        <taxon>Lactobacillus</taxon>
    </lineage>
</organism>
<proteinExistence type="inferred from homology"/>
<reference key="1">
    <citation type="journal article" date="2005" name="Proc. Natl. Acad. Sci. U.S.A.">
        <title>Complete genome sequence of the probiotic lactic acid bacterium Lactobacillus acidophilus NCFM.</title>
        <authorList>
            <person name="Altermann E."/>
            <person name="Russell W.M."/>
            <person name="Azcarate-Peril M.A."/>
            <person name="Barrangou R."/>
            <person name="Buck B.L."/>
            <person name="McAuliffe O."/>
            <person name="Souther N."/>
            <person name="Dobson A."/>
            <person name="Duong T."/>
            <person name="Callanan M."/>
            <person name="Lick S."/>
            <person name="Hamrick A."/>
            <person name="Cano R."/>
            <person name="Klaenhammer T.R."/>
        </authorList>
    </citation>
    <scope>NUCLEOTIDE SEQUENCE [LARGE SCALE GENOMIC DNA]</scope>
    <source>
        <strain>ATCC 700396 / NCK56 / N2 / NCFM</strain>
    </source>
</reference>